<feature type="chain" id="PRO_0000122073" description="Serine--tRNA ligase">
    <location>
        <begin position="1"/>
        <end position="427"/>
    </location>
</feature>
<feature type="binding site" evidence="1">
    <location>
        <begin position="231"/>
        <end position="233"/>
    </location>
    <ligand>
        <name>L-serine</name>
        <dbReference type="ChEBI" id="CHEBI:33384"/>
    </ligand>
</feature>
<feature type="binding site" evidence="1">
    <location>
        <begin position="262"/>
        <end position="264"/>
    </location>
    <ligand>
        <name>ATP</name>
        <dbReference type="ChEBI" id="CHEBI:30616"/>
    </ligand>
</feature>
<feature type="binding site" evidence="1">
    <location>
        <position position="285"/>
    </location>
    <ligand>
        <name>L-serine</name>
        <dbReference type="ChEBI" id="CHEBI:33384"/>
    </ligand>
</feature>
<feature type="binding site" evidence="1">
    <location>
        <begin position="349"/>
        <end position="352"/>
    </location>
    <ligand>
        <name>ATP</name>
        <dbReference type="ChEBI" id="CHEBI:30616"/>
    </ligand>
</feature>
<feature type="binding site" evidence="1">
    <location>
        <position position="385"/>
    </location>
    <ligand>
        <name>L-serine</name>
        <dbReference type="ChEBI" id="CHEBI:33384"/>
    </ligand>
</feature>
<accession>Q71W17</accession>
<reference key="1">
    <citation type="journal article" date="2004" name="Nucleic Acids Res.">
        <title>Whole genome comparisons of serotype 4b and 1/2a strains of the food-borne pathogen Listeria monocytogenes reveal new insights into the core genome components of this species.</title>
        <authorList>
            <person name="Nelson K.E."/>
            <person name="Fouts D.E."/>
            <person name="Mongodin E.F."/>
            <person name="Ravel J."/>
            <person name="DeBoy R.T."/>
            <person name="Kolonay J.F."/>
            <person name="Rasko D.A."/>
            <person name="Angiuoli S.V."/>
            <person name="Gill S.R."/>
            <person name="Paulsen I.T."/>
            <person name="Peterson J.D."/>
            <person name="White O."/>
            <person name="Nelson W.C."/>
            <person name="Nierman W.C."/>
            <person name="Beanan M.J."/>
            <person name="Brinkac L.M."/>
            <person name="Daugherty S.C."/>
            <person name="Dodson R.J."/>
            <person name="Durkin A.S."/>
            <person name="Madupu R."/>
            <person name="Haft D.H."/>
            <person name="Selengut J."/>
            <person name="Van Aken S.E."/>
            <person name="Khouri H.M."/>
            <person name="Fedorova N."/>
            <person name="Forberger H.A."/>
            <person name="Tran B."/>
            <person name="Kathariou S."/>
            <person name="Wonderling L.D."/>
            <person name="Uhlich G.A."/>
            <person name="Bayles D.O."/>
            <person name="Luchansky J.B."/>
            <person name="Fraser C.M."/>
        </authorList>
    </citation>
    <scope>NUCLEOTIDE SEQUENCE [LARGE SCALE GENOMIC DNA]</scope>
    <source>
        <strain>F2365</strain>
    </source>
</reference>
<sequence length="427" mass="49108">MLDVKLLRNNFDEVKQKLQNRGEDLGEFEKFGELDKRRRTLIVETEALKSQRNEVSQEIAKLKREKQDADAKIEEMRVVGDRIKTLDIELREIDEKLDMILMSIPNIPHESTPVGESEDDNVEIRKWGEVREFDFEPKAHWDLGTDLDILDFENAAKVTGSRFVFYKKLGARLERALINFMMDLHSNEHGYEEMLPPYMVNRASMTGTGQLPKFEEDAFLIEAEDYFLIPTAEVPVTNYHREDILKAEDLPRKYTAFSACFRSEAGSAGRDTRGLIRQHQFNKVELVQFVKPEDSYAALEKLTGNAEEVLRRLELPYRVLSMCTADLGFTAAKKYDLEVWIPSYNSYREISSCSNFESFQARRANIRFRREPGSKPEYVHTLNGSGLALGRTVAAILENYQDADGSVRIPKVLQGYMGGIEKIELPK</sequence>
<keyword id="KW-0030">Aminoacyl-tRNA synthetase</keyword>
<keyword id="KW-0067">ATP-binding</keyword>
<keyword id="KW-0963">Cytoplasm</keyword>
<keyword id="KW-0436">Ligase</keyword>
<keyword id="KW-0547">Nucleotide-binding</keyword>
<keyword id="KW-0648">Protein biosynthesis</keyword>
<comment type="function">
    <text evidence="1">Catalyzes the attachment of serine to tRNA(Ser). Is also able to aminoacylate tRNA(Sec) with serine, to form the misacylated tRNA L-seryl-tRNA(Sec), which will be further converted into selenocysteinyl-tRNA(Sec).</text>
</comment>
<comment type="catalytic activity">
    <reaction evidence="1">
        <text>tRNA(Ser) + L-serine + ATP = L-seryl-tRNA(Ser) + AMP + diphosphate + H(+)</text>
        <dbReference type="Rhea" id="RHEA:12292"/>
        <dbReference type="Rhea" id="RHEA-COMP:9669"/>
        <dbReference type="Rhea" id="RHEA-COMP:9703"/>
        <dbReference type="ChEBI" id="CHEBI:15378"/>
        <dbReference type="ChEBI" id="CHEBI:30616"/>
        <dbReference type="ChEBI" id="CHEBI:33019"/>
        <dbReference type="ChEBI" id="CHEBI:33384"/>
        <dbReference type="ChEBI" id="CHEBI:78442"/>
        <dbReference type="ChEBI" id="CHEBI:78533"/>
        <dbReference type="ChEBI" id="CHEBI:456215"/>
        <dbReference type="EC" id="6.1.1.11"/>
    </reaction>
</comment>
<comment type="catalytic activity">
    <reaction evidence="1">
        <text>tRNA(Sec) + L-serine + ATP = L-seryl-tRNA(Sec) + AMP + diphosphate + H(+)</text>
        <dbReference type="Rhea" id="RHEA:42580"/>
        <dbReference type="Rhea" id="RHEA-COMP:9742"/>
        <dbReference type="Rhea" id="RHEA-COMP:10128"/>
        <dbReference type="ChEBI" id="CHEBI:15378"/>
        <dbReference type="ChEBI" id="CHEBI:30616"/>
        <dbReference type="ChEBI" id="CHEBI:33019"/>
        <dbReference type="ChEBI" id="CHEBI:33384"/>
        <dbReference type="ChEBI" id="CHEBI:78442"/>
        <dbReference type="ChEBI" id="CHEBI:78533"/>
        <dbReference type="ChEBI" id="CHEBI:456215"/>
        <dbReference type="EC" id="6.1.1.11"/>
    </reaction>
</comment>
<comment type="pathway">
    <text evidence="1">Aminoacyl-tRNA biosynthesis; selenocysteinyl-tRNA(Sec) biosynthesis; L-seryl-tRNA(Sec) from L-serine and tRNA(Sec): step 1/1.</text>
</comment>
<comment type="subunit">
    <text evidence="1">Homodimer. The tRNA molecule binds across the dimer.</text>
</comment>
<comment type="subcellular location">
    <subcellularLocation>
        <location evidence="1">Cytoplasm</location>
    </subcellularLocation>
</comment>
<comment type="domain">
    <text evidence="1">Consists of two distinct domains, a catalytic core and a N-terminal extension that is involved in tRNA binding.</text>
</comment>
<comment type="similarity">
    <text evidence="1">Belongs to the class-II aminoacyl-tRNA synthetase family. Type-1 seryl-tRNA synthetase subfamily.</text>
</comment>
<protein>
    <recommendedName>
        <fullName evidence="1">Serine--tRNA ligase</fullName>
        <ecNumber evidence="1">6.1.1.11</ecNumber>
    </recommendedName>
    <alternativeName>
        <fullName evidence="1">Seryl-tRNA synthetase</fullName>
        <shortName evidence="1">SerRS</shortName>
    </alternativeName>
    <alternativeName>
        <fullName evidence="1">Seryl-tRNA(Ser/Sec) synthetase</fullName>
    </alternativeName>
</protein>
<organism>
    <name type="scientific">Listeria monocytogenes serotype 4b (strain F2365)</name>
    <dbReference type="NCBI Taxonomy" id="265669"/>
    <lineage>
        <taxon>Bacteria</taxon>
        <taxon>Bacillati</taxon>
        <taxon>Bacillota</taxon>
        <taxon>Bacilli</taxon>
        <taxon>Bacillales</taxon>
        <taxon>Listeriaceae</taxon>
        <taxon>Listeria</taxon>
    </lineage>
</organism>
<proteinExistence type="inferred from homology"/>
<name>SYS_LISMF</name>
<evidence type="ECO:0000255" key="1">
    <source>
        <dbReference type="HAMAP-Rule" id="MF_00176"/>
    </source>
</evidence>
<gene>
    <name evidence="1" type="primary">serS</name>
    <name type="ordered locus">LMOf2365_2734</name>
</gene>
<dbReference type="EC" id="6.1.1.11" evidence="1"/>
<dbReference type="EMBL" id="AE017262">
    <property type="protein sequence ID" value="AAT05499.1"/>
    <property type="molecule type" value="Genomic_DNA"/>
</dbReference>
<dbReference type="RefSeq" id="WP_003725040.1">
    <property type="nucleotide sequence ID" value="NC_002973.6"/>
</dbReference>
<dbReference type="SMR" id="Q71W17"/>
<dbReference type="KEGG" id="lmf:LMOf2365_2734"/>
<dbReference type="HOGENOM" id="CLU_023797_1_1_9"/>
<dbReference type="UniPathway" id="UPA00906">
    <property type="reaction ID" value="UER00895"/>
</dbReference>
<dbReference type="GO" id="GO:0005737">
    <property type="term" value="C:cytoplasm"/>
    <property type="evidence" value="ECO:0007669"/>
    <property type="project" value="UniProtKB-SubCell"/>
</dbReference>
<dbReference type="GO" id="GO:0005524">
    <property type="term" value="F:ATP binding"/>
    <property type="evidence" value="ECO:0007669"/>
    <property type="project" value="UniProtKB-UniRule"/>
</dbReference>
<dbReference type="GO" id="GO:0140096">
    <property type="term" value="F:catalytic activity, acting on a protein"/>
    <property type="evidence" value="ECO:0007669"/>
    <property type="project" value="UniProtKB-ARBA"/>
</dbReference>
<dbReference type="GO" id="GO:0004828">
    <property type="term" value="F:serine-tRNA ligase activity"/>
    <property type="evidence" value="ECO:0007669"/>
    <property type="project" value="UniProtKB-UniRule"/>
</dbReference>
<dbReference type="GO" id="GO:0016740">
    <property type="term" value="F:transferase activity"/>
    <property type="evidence" value="ECO:0007669"/>
    <property type="project" value="UniProtKB-ARBA"/>
</dbReference>
<dbReference type="GO" id="GO:0016260">
    <property type="term" value="P:selenocysteine biosynthetic process"/>
    <property type="evidence" value="ECO:0007669"/>
    <property type="project" value="UniProtKB-UniRule"/>
</dbReference>
<dbReference type="GO" id="GO:0006434">
    <property type="term" value="P:seryl-tRNA aminoacylation"/>
    <property type="evidence" value="ECO:0007669"/>
    <property type="project" value="UniProtKB-UniRule"/>
</dbReference>
<dbReference type="CDD" id="cd00770">
    <property type="entry name" value="SerRS_core"/>
    <property type="match status" value="1"/>
</dbReference>
<dbReference type="Gene3D" id="3.30.930.10">
    <property type="entry name" value="Bira Bifunctional Protein, Domain 2"/>
    <property type="match status" value="1"/>
</dbReference>
<dbReference type="Gene3D" id="1.10.287.40">
    <property type="entry name" value="Serine-tRNA synthetase, tRNA binding domain"/>
    <property type="match status" value="1"/>
</dbReference>
<dbReference type="HAMAP" id="MF_00176">
    <property type="entry name" value="Ser_tRNA_synth_type1"/>
    <property type="match status" value="1"/>
</dbReference>
<dbReference type="InterPro" id="IPR002314">
    <property type="entry name" value="aa-tRNA-synt_IIb"/>
</dbReference>
<dbReference type="InterPro" id="IPR006195">
    <property type="entry name" value="aa-tRNA-synth_II"/>
</dbReference>
<dbReference type="InterPro" id="IPR045864">
    <property type="entry name" value="aa-tRNA-synth_II/BPL/LPL"/>
</dbReference>
<dbReference type="InterPro" id="IPR002317">
    <property type="entry name" value="Ser-tRNA-ligase_type_1"/>
</dbReference>
<dbReference type="InterPro" id="IPR015866">
    <property type="entry name" value="Ser-tRNA-synth_1_N"/>
</dbReference>
<dbReference type="InterPro" id="IPR042103">
    <property type="entry name" value="SerRS_1_N_sf"/>
</dbReference>
<dbReference type="InterPro" id="IPR033729">
    <property type="entry name" value="SerRS_core"/>
</dbReference>
<dbReference type="InterPro" id="IPR010978">
    <property type="entry name" value="tRNA-bd_arm"/>
</dbReference>
<dbReference type="NCBIfam" id="TIGR00414">
    <property type="entry name" value="serS"/>
    <property type="match status" value="1"/>
</dbReference>
<dbReference type="PANTHER" id="PTHR43697:SF1">
    <property type="entry name" value="SERINE--TRNA LIGASE"/>
    <property type="match status" value="1"/>
</dbReference>
<dbReference type="PANTHER" id="PTHR43697">
    <property type="entry name" value="SERYL-TRNA SYNTHETASE"/>
    <property type="match status" value="1"/>
</dbReference>
<dbReference type="Pfam" id="PF02403">
    <property type="entry name" value="Seryl_tRNA_N"/>
    <property type="match status" value="1"/>
</dbReference>
<dbReference type="Pfam" id="PF00587">
    <property type="entry name" value="tRNA-synt_2b"/>
    <property type="match status" value="1"/>
</dbReference>
<dbReference type="PIRSF" id="PIRSF001529">
    <property type="entry name" value="Ser-tRNA-synth_IIa"/>
    <property type="match status" value="1"/>
</dbReference>
<dbReference type="PRINTS" id="PR00981">
    <property type="entry name" value="TRNASYNTHSER"/>
</dbReference>
<dbReference type="SUPFAM" id="SSF55681">
    <property type="entry name" value="Class II aaRS and biotin synthetases"/>
    <property type="match status" value="1"/>
</dbReference>
<dbReference type="SUPFAM" id="SSF46589">
    <property type="entry name" value="tRNA-binding arm"/>
    <property type="match status" value="1"/>
</dbReference>
<dbReference type="PROSITE" id="PS50862">
    <property type="entry name" value="AA_TRNA_LIGASE_II"/>
    <property type="match status" value="1"/>
</dbReference>